<gene>
    <name evidence="2" type="primary">RBCS3</name>
    <name evidence="3" type="synonym">RBCS-3A/3C</name>
</gene>
<name>RBS3_SOLLC</name>
<dbReference type="EMBL" id="X05984">
    <property type="protein sequence ID" value="CAA29402.1"/>
    <property type="molecule type" value="Genomic_DNA"/>
</dbReference>
<dbReference type="EMBL" id="M13544">
    <property type="protein sequence ID" value="AAA34190.1"/>
    <property type="molecule type" value="Genomic_DNA"/>
</dbReference>
<dbReference type="EMBL" id="X05986">
    <property type="protein sequence ID" value="CAA29404.1"/>
    <property type="molecule type" value="Genomic_DNA"/>
</dbReference>
<dbReference type="EMBL" id="X66070">
    <property type="protein sequence ID" value="CAA46870.1"/>
    <property type="molecule type" value="Genomic_DNA"/>
</dbReference>
<dbReference type="EMBL" id="X66072">
    <property type="protein sequence ID" value="CAA46872.1"/>
    <property type="molecule type" value="Genomic_DNA"/>
</dbReference>
<dbReference type="PIR" id="S01109">
    <property type="entry name" value="RKTO3C"/>
</dbReference>
<dbReference type="RefSeq" id="NP_001334840.1">
    <property type="nucleotide sequence ID" value="NM_001347911.1"/>
</dbReference>
<dbReference type="SMR" id="P07180"/>
<dbReference type="FunCoup" id="P07180">
    <property type="interactions" value="1438"/>
</dbReference>
<dbReference type="STRING" id="4081.P07180"/>
<dbReference type="GeneID" id="108449891"/>
<dbReference type="KEGG" id="sly:108449891"/>
<dbReference type="InParanoid" id="P07180"/>
<dbReference type="Proteomes" id="UP000004994">
    <property type="component" value="Unplaced"/>
</dbReference>
<dbReference type="ExpressionAtlas" id="P07180">
    <property type="expression patterns" value="baseline and differential"/>
</dbReference>
<dbReference type="GO" id="GO:0009507">
    <property type="term" value="C:chloroplast"/>
    <property type="evidence" value="ECO:0007669"/>
    <property type="project" value="UniProtKB-SubCell"/>
</dbReference>
<dbReference type="GO" id="GO:0009506">
    <property type="term" value="C:plasmodesma"/>
    <property type="evidence" value="ECO:0007669"/>
    <property type="project" value="UniProtKB-SubCell"/>
</dbReference>
<dbReference type="GO" id="GO:0016984">
    <property type="term" value="F:ribulose-bisphosphate carboxylase activity"/>
    <property type="evidence" value="ECO:0007669"/>
    <property type="project" value="UniProtKB-UniRule"/>
</dbReference>
<dbReference type="GO" id="GO:0051607">
    <property type="term" value="P:defense response to virus"/>
    <property type="evidence" value="ECO:0007669"/>
    <property type="project" value="UniProtKB-KW"/>
</dbReference>
<dbReference type="GO" id="GO:0009853">
    <property type="term" value="P:photorespiration"/>
    <property type="evidence" value="ECO:0007669"/>
    <property type="project" value="UniProtKB-KW"/>
</dbReference>
<dbReference type="GO" id="GO:0019253">
    <property type="term" value="P:reductive pentose-phosphate cycle"/>
    <property type="evidence" value="ECO:0007669"/>
    <property type="project" value="UniProtKB-UniRule"/>
</dbReference>
<dbReference type="CDD" id="cd03527">
    <property type="entry name" value="RuBisCO_small"/>
    <property type="match status" value="1"/>
</dbReference>
<dbReference type="FunFam" id="3.30.190.10:FF:000001">
    <property type="entry name" value="Ribulose bisphosphate carboxylase small chain, chloroplastic"/>
    <property type="match status" value="1"/>
</dbReference>
<dbReference type="Gene3D" id="3.30.190.10">
    <property type="entry name" value="Ribulose bisphosphate carboxylase, small subunit"/>
    <property type="match status" value="1"/>
</dbReference>
<dbReference type="HAMAP" id="MF_00859">
    <property type="entry name" value="RuBisCO_S_bact"/>
    <property type="match status" value="1"/>
</dbReference>
<dbReference type="InterPro" id="IPR024681">
    <property type="entry name" value="RuBisCO_ssu"/>
</dbReference>
<dbReference type="InterPro" id="IPR000894">
    <property type="entry name" value="RuBisCO_ssu_dom"/>
</dbReference>
<dbReference type="InterPro" id="IPR024680">
    <property type="entry name" value="RuBisCO_ssu_N"/>
</dbReference>
<dbReference type="InterPro" id="IPR036385">
    <property type="entry name" value="RuBisCO_ssu_sf"/>
</dbReference>
<dbReference type="PANTHER" id="PTHR31262">
    <property type="entry name" value="RIBULOSE BISPHOSPHATE CARBOXYLASE SMALL CHAIN 1, CHLOROPLASTIC"/>
    <property type="match status" value="1"/>
</dbReference>
<dbReference type="PANTHER" id="PTHR31262:SF10">
    <property type="entry name" value="RIBULOSE BISPHOSPHATE CARBOXYLASE SMALL SUBUNIT 1A, CHLOROPLASTIC-RELATED"/>
    <property type="match status" value="1"/>
</dbReference>
<dbReference type="Pfam" id="PF12338">
    <property type="entry name" value="RbcS"/>
    <property type="match status" value="1"/>
</dbReference>
<dbReference type="Pfam" id="PF00101">
    <property type="entry name" value="RuBisCO_small"/>
    <property type="match status" value="1"/>
</dbReference>
<dbReference type="PRINTS" id="PR00152">
    <property type="entry name" value="RUBISCOSMALL"/>
</dbReference>
<dbReference type="SMART" id="SM00961">
    <property type="entry name" value="RuBisCO_small"/>
    <property type="match status" value="1"/>
</dbReference>
<dbReference type="SUPFAM" id="SSF55239">
    <property type="entry name" value="RuBisCO, small subunit"/>
    <property type="match status" value="1"/>
</dbReference>
<protein>
    <recommendedName>
        <fullName evidence="2">Ribulose bisphosphate carboxylase small subunit, chloroplastic 3</fullName>
        <shortName evidence="2">RuBisCO small subunit 3</shortName>
    </recommendedName>
    <alternativeName>
        <fullName evidence="3">Ribulose bisphosphate carboxylase small chain 3A/3C, chloroplastic</fullName>
        <shortName evidence="3">RuBisCO small subunit 3A/3C</shortName>
    </alternativeName>
</protein>
<comment type="function">
    <text evidence="1 2">RuBisCO catalyzes two reactions: the carboxylation of D-ribulose 1,5-bisphosphate, the primary event in carbon dioxide fixation, as well as the oxidative fragmentation of the pentose substrate. Both reactions occur simultaneously and in competition at the same active site. Although the small subunit is not catalytic it is essential for maximal activity. Involved in antiviral defenses (By similarity).</text>
</comment>
<comment type="subunit">
    <text evidence="2">Heterohexadecamer of 8 large and 8 small subunits.</text>
</comment>
<comment type="subunit">
    <text evidence="4">(Microbial infection) Binds to tobamovirus movement protein; this interaction seems required for viral systemic movement.</text>
</comment>
<comment type="subcellular location">
    <subcellularLocation>
        <location evidence="2">Plastid</location>
        <location evidence="2">Chloroplast</location>
    </subcellularLocation>
</comment>
<comment type="subcellular location">
    <subcellularLocation>
        <location evidence="1">Cell junction</location>
        <location evidence="1">Plasmodesma</location>
    </subcellularLocation>
    <text evidence="1">(Microbial infection) May be present in virus replication complexes (VRCs) of tobamovirus infected cells.</text>
</comment>
<comment type="miscellaneous">
    <text evidence="2">The basic functional RuBisCO is composed of a large chain homodimer in a 'head-to-tail' conformation. In form I RuBisCO this homodimer is arranged in a barrel-like tetramer with the small subunits forming a tetrameric 'cap' on each end of the 'barrel'.</text>
</comment>
<comment type="similarity">
    <text evidence="2">Belongs to the RuBisCO small chain family.</text>
</comment>
<organism>
    <name type="scientific">Solanum lycopersicum</name>
    <name type="common">Tomato</name>
    <name type="synonym">Lycopersicon esculentum</name>
    <dbReference type="NCBI Taxonomy" id="4081"/>
    <lineage>
        <taxon>Eukaryota</taxon>
        <taxon>Viridiplantae</taxon>
        <taxon>Streptophyta</taxon>
        <taxon>Embryophyta</taxon>
        <taxon>Tracheophyta</taxon>
        <taxon>Spermatophyta</taxon>
        <taxon>Magnoliopsida</taxon>
        <taxon>eudicotyledons</taxon>
        <taxon>Gunneridae</taxon>
        <taxon>Pentapetalae</taxon>
        <taxon>asterids</taxon>
        <taxon>lamiids</taxon>
        <taxon>Solanales</taxon>
        <taxon>Solanaceae</taxon>
        <taxon>Solanoideae</taxon>
        <taxon>Solaneae</taxon>
        <taxon>Solanum</taxon>
        <taxon>Solanum subgen. Lycopersicon</taxon>
    </lineage>
</organism>
<reference key="1">
    <citation type="journal article" date="1986" name="Proc. Natl. Acad. Sci. U.S.A.">
        <title>Evidence for selection as a mechanism in the concerted evolution of Lycopersicon esculentum (tomato) genes encoding the small subunit of ribulose-1,5-bisphosphate carboxylase/oxygenase.</title>
        <authorList>
            <person name="Pichersky E."/>
            <person name="Bernatzky R."/>
            <person name="Tanksley S.D."/>
            <person name="Cashmore A.R."/>
        </authorList>
    </citation>
    <scope>NUCLEOTIDE SEQUENCE [GENOMIC DNA]</scope>
</reference>
<reference key="2">
    <citation type="journal article" date="1987" name="Mol. Gen. Genet.">
        <title>Genomic organization, sequence analysis and expression of all five genes encoding the small subunit of ribulose-1,5-bisphosphate carboxylase/oxygenase from tomato.</title>
        <authorList>
            <person name="Sugita M."/>
            <person name="Manzara T."/>
            <person name="Pichersky E."/>
            <person name="Cashmore A."/>
            <person name="Gruissem W."/>
        </authorList>
    </citation>
    <scope>NUCLEOTIDE SEQUENCE [GENOMIC DNA]</scope>
    <source>
        <strain>cv. VFNT Cherry LA1221</strain>
    </source>
</reference>
<reference key="3">
    <citation type="submission" date="1989-08" db="EMBL/GenBank/DDBJ databases">
        <authorList>
            <person name="Manzara T."/>
        </authorList>
    </citation>
    <scope>SEQUENCE REVISION</scope>
</reference>
<reference key="4">
    <citation type="journal article" date="1993" name="Plant Mol. Biol.">
        <title>Developmental and organ-specific changes in DNA-protein interactions in the tomato rbcS1, rbcS2 and rbcS3A promoter regions.</title>
        <authorList>
            <person name="Manzara T."/>
            <person name="Carrasco P."/>
            <person name="Gruissem W."/>
        </authorList>
    </citation>
    <scope>NUCLEOTIDE SEQUENCE [GENOMIC DNA] OF 1-9</scope>
    <source>
        <strain>cv. VFNT Cherry LA1221</strain>
        <tissue>Root</tissue>
    </source>
</reference>
<evidence type="ECO:0000250" key="1">
    <source>
        <dbReference type="UniProtKB" id="A0A0S4IJL0"/>
    </source>
</evidence>
<evidence type="ECO:0000255" key="2">
    <source>
        <dbReference type="HAMAP-Rule" id="MF_00860"/>
    </source>
</evidence>
<evidence type="ECO:0000303" key="3">
    <source>
    </source>
</evidence>
<evidence type="ECO:0000305" key="4"/>
<sequence length="180" mass="20231">MASSVMSSAAVATRGNGAQASMVAPFTGLKSTASFPVSRKQNLDITSIASNGGRVSCMQVWPPINMKKYETLSYLPDLSDEQLLSEIEYLLKNGWVPCLEFETEHGFVYRENHKSPGYYDGRYWTMWKLPMFGCTDATQVLAEVQEAKKAYPQAWVRIIGFDNVRQVQCISFIAYKPEGY</sequence>
<feature type="transit peptide" description="Chloroplast" evidence="2">
    <location>
        <begin position="1"/>
        <end position="56"/>
    </location>
</feature>
<feature type="chain" id="PRO_0000031520" description="Ribulose bisphosphate carboxylase small subunit, chloroplastic 3" evidence="2">
    <location>
        <begin position="57"/>
        <end position="180"/>
    </location>
</feature>
<proteinExistence type="inferred from homology"/>
<keyword id="KW-0051">Antiviral defense</keyword>
<keyword id="KW-0113">Calvin cycle</keyword>
<keyword id="KW-0120">Carbon dioxide fixation</keyword>
<keyword id="KW-0965">Cell junction</keyword>
<keyword id="KW-0150">Chloroplast</keyword>
<keyword id="KW-0945">Host-virus interaction</keyword>
<keyword id="KW-0601">Photorespiration</keyword>
<keyword id="KW-0602">Photosynthesis</keyword>
<keyword id="KW-0934">Plastid</keyword>
<keyword id="KW-1185">Reference proteome</keyword>
<keyword id="KW-0809">Transit peptide</keyword>
<accession>P07180</accession>